<proteinExistence type="inferred from homology"/>
<name>RS9_CLOBJ</name>
<keyword id="KW-0687">Ribonucleoprotein</keyword>
<keyword id="KW-0689">Ribosomal protein</keyword>
<organism>
    <name type="scientific">Clostridium botulinum (strain Kyoto / Type A2)</name>
    <dbReference type="NCBI Taxonomy" id="536232"/>
    <lineage>
        <taxon>Bacteria</taxon>
        <taxon>Bacillati</taxon>
        <taxon>Bacillota</taxon>
        <taxon>Clostridia</taxon>
        <taxon>Eubacteriales</taxon>
        <taxon>Clostridiaceae</taxon>
        <taxon>Clostridium</taxon>
    </lineage>
</organism>
<feature type="chain" id="PRO_1000146443" description="Small ribosomal subunit protein uS9">
    <location>
        <begin position="1"/>
        <end position="130"/>
    </location>
</feature>
<feature type="region of interest" description="Disordered" evidence="2">
    <location>
        <begin position="102"/>
        <end position="130"/>
    </location>
</feature>
<feature type="compositionally biased region" description="Basic residues" evidence="2">
    <location>
        <begin position="111"/>
        <end position="130"/>
    </location>
</feature>
<protein>
    <recommendedName>
        <fullName evidence="1">Small ribosomal subunit protein uS9</fullName>
    </recommendedName>
    <alternativeName>
        <fullName evidence="3">30S ribosomal protein S9</fullName>
    </alternativeName>
</protein>
<comment type="similarity">
    <text evidence="1">Belongs to the universal ribosomal protein uS9 family.</text>
</comment>
<accession>C1FMR5</accession>
<reference key="1">
    <citation type="submission" date="2008-10" db="EMBL/GenBank/DDBJ databases">
        <title>Genome sequence of Clostridium botulinum A2 Kyoto.</title>
        <authorList>
            <person name="Shrivastava S."/>
            <person name="Brinkac L.M."/>
            <person name="Brown J.L."/>
            <person name="Bruce D."/>
            <person name="Detter C.C."/>
            <person name="Johnson E.A."/>
            <person name="Munk C.A."/>
            <person name="Smith L.A."/>
            <person name="Smith T.J."/>
            <person name="Sutton G."/>
            <person name="Brettin T.S."/>
        </authorList>
    </citation>
    <scope>NUCLEOTIDE SEQUENCE [LARGE SCALE GENOMIC DNA]</scope>
    <source>
        <strain>Kyoto / Type A2</strain>
    </source>
</reference>
<evidence type="ECO:0000255" key="1">
    <source>
        <dbReference type="HAMAP-Rule" id="MF_00532"/>
    </source>
</evidence>
<evidence type="ECO:0000256" key="2">
    <source>
        <dbReference type="SAM" id="MobiDB-lite"/>
    </source>
</evidence>
<evidence type="ECO:0000305" key="3"/>
<gene>
    <name evidence="1" type="primary">rpsI</name>
    <name type="ordered locus">CLM_3912</name>
</gene>
<sequence>MAKVQYFGTGRRKKSVARVRLVAGDGKVIINNRDIENYFPIETLRVIVNQPLVLTETKDKYDVLVNVHGGGFTGQAGAVRHGISRALVKADENMKSSLKKAGFLTRDPRMKERKKYGLKKARRSPQFSKR</sequence>
<dbReference type="EMBL" id="CP001581">
    <property type="protein sequence ID" value="ACO84795.1"/>
    <property type="molecule type" value="Genomic_DNA"/>
</dbReference>
<dbReference type="RefSeq" id="WP_003357662.1">
    <property type="nucleotide sequence ID" value="NC_012563.1"/>
</dbReference>
<dbReference type="SMR" id="C1FMR5"/>
<dbReference type="GeneID" id="5184277"/>
<dbReference type="KEGG" id="cby:CLM_3912"/>
<dbReference type="eggNOG" id="COG0103">
    <property type="taxonomic scope" value="Bacteria"/>
</dbReference>
<dbReference type="HOGENOM" id="CLU_046483_2_1_9"/>
<dbReference type="Proteomes" id="UP000001374">
    <property type="component" value="Chromosome"/>
</dbReference>
<dbReference type="GO" id="GO:0022627">
    <property type="term" value="C:cytosolic small ribosomal subunit"/>
    <property type="evidence" value="ECO:0007669"/>
    <property type="project" value="TreeGrafter"/>
</dbReference>
<dbReference type="GO" id="GO:0003723">
    <property type="term" value="F:RNA binding"/>
    <property type="evidence" value="ECO:0007669"/>
    <property type="project" value="TreeGrafter"/>
</dbReference>
<dbReference type="GO" id="GO:0003735">
    <property type="term" value="F:structural constituent of ribosome"/>
    <property type="evidence" value="ECO:0007669"/>
    <property type="project" value="InterPro"/>
</dbReference>
<dbReference type="GO" id="GO:0006412">
    <property type="term" value="P:translation"/>
    <property type="evidence" value="ECO:0007669"/>
    <property type="project" value="UniProtKB-UniRule"/>
</dbReference>
<dbReference type="FunFam" id="3.30.230.10:FF:000001">
    <property type="entry name" value="30S ribosomal protein S9"/>
    <property type="match status" value="1"/>
</dbReference>
<dbReference type="Gene3D" id="3.30.230.10">
    <property type="match status" value="1"/>
</dbReference>
<dbReference type="HAMAP" id="MF_00532_B">
    <property type="entry name" value="Ribosomal_uS9_B"/>
    <property type="match status" value="1"/>
</dbReference>
<dbReference type="InterPro" id="IPR020568">
    <property type="entry name" value="Ribosomal_Su5_D2-typ_SF"/>
</dbReference>
<dbReference type="InterPro" id="IPR000754">
    <property type="entry name" value="Ribosomal_uS9"/>
</dbReference>
<dbReference type="InterPro" id="IPR023035">
    <property type="entry name" value="Ribosomal_uS9_bac/plastid"/>
</dbReference>
<dbReference type="InterPro" id="IPR020574">
    <property type="entry name" value="Ribosomal_uS9_CS"/>
</dbReference>
<dbReference type="InterPro" id="IPR014721">
    <property type="entry name" value="Ribsml_uS5_D2-typ_fold_subgr"/>
</dbReference>
<dbReference type="NCBIfam" id="NF001099">
    <property type="entry name" value="PRK00132.1"/>
    <property type="match status" value="1"/>
</dbReference>
<dbReference type="PANTHER" id="PTHR21569">
    <property type="entry name" value="RIBOSOMAL PROTEIN S9"/>
    <property type="match status" value="1"/>
</dbReference>
<dbReference type="PANTHER" id="PTHR21569:SF1">
    <property type="entry name" value="SMALL RIBOSOMAL SUBUNIT PROTEIN US9M"/>
    <property type="match status" value="1"/>
</dbReference>
<dbReference type="Pfam" id="PF00380">
    <property type="entry name" value="Ribosomal_S9"/>
    <property type="match status" value="1"/>
</dbReference>
<dbReference type="SUPFAM" id="SSF54211">
    <property type="entry name" value="Ribosomal protein S5 domain 2-like"/>
    <property type="match status" value="1"/>
</dbReference>
<dbReference type="PROSITE" id="PS00360">
    <property type="entry name" value="RIBOSOMAL_S9"/>
    <property type="match status" value="1"/>
</dbReference>